<organism>
    <name type="scientific">Bacillus mycoides (strain KBAB4)</name>
    <name type="common">Bacillus weihenstephanensis</name>
    <dbReference type="NCBI Taxonomy" id="315730"/>
    <lineage>
        <taxon>Bacteria</taxon>
        <taxon>Bacillati</taxon>
        <taxon>Bacillota</taxon>
        <taxon>Bacilli</taxon>
        <taxon>Bacillales</taxon>
        <taxon>Bacillaceae</taxon>
        <taxon>Bacillus</taxon>
        <taxon>Bacillus cereus group</taxon>
    </lineage>
</organism>
<dbReference type="EMBL" id="CP000903">
    <property type="protein sequence ID" value="ABY43345.1"/>
    <property type="molecule type" value="Genomic_DNA"/>
</dbReference>
<dbReference type="RefSeq" id="WP_002085796.1">
    <property type="nucleotide sequence ID" value="NZ_CAKMRX030000088.1"/>
</dbReference>
<dbReference type="SMR" id="A9VU29"/>
<dbReference type="KEGG" id="bwe:BcerKBAB4_2120"/>
<dbReference type="eggNOG" id="COG4479">
    <property type="taxonomic scope" value="Bacteria"/>
</dbReference>
<dbReference type="HOGENOM" id="CLU_177534_0_0_9"/>
<dbReference type="Proteomes" id="UP000002154">
    <property type="component" value="Chromosome"/>
</dbReference>
<dbReference type="Gene3D" id="1.10.150.260">
    <property type="entry name" value="YozE SAM-like"/>
    <property type="match status" value="1"/>
</dbReference>
<dbReference type="HAMAP" id="MF_01538">
    <property type="entry name" value="UPF0346"/>
    <property type="match status" value="1"/>
</dbReference>
<dbReference type="InterPro" id="IPR010673">
    <property type="entry name" value="UPF0346"/>
</dbReference>
<dbReference type="InterPro" id="IPR023089">
    <property type="entry name" value="YozE_SAM-like"/>
</dbReference>
<dbReference type="InterPro" id="IPR036806">
    <property type="entry name" value="YozE_SAM-like_sf"/>
</dbReference>
<dbReference type="NCBIfam" id="NF010193">
    <property type="entry name" value="PRK13672.1"/>
    <property type="match status" value="1"/>
</dbReference>
<dbReference type="Pfam" id="PF06855">
    <property type="entry name" value="YozE_SAM_like"/>
    <property type="match status" value="1"/>
</dbReference>
<dbReference type="PIRSF" id="PIRSF037262">
    <property type="entry name" value="UCP037262"/>
    <property type="match status" value="1"/>
</dbReference>
<dbReference type="SUPFAM" id="SSF140652">
    <property type="entry name" value="YozE-like"/>
    <property type="match status" value="1"/>
</dbReference>
<feature type="chain" id="PRO_1000146611" description="UPF0346 protein BcerKBAB4_2120">
    <location>
        <begin position="1"/>
        <end position="71"/>
    </location>
</feature>
<gene>
    <name type="ordered locus">BcerKBAB4_2120</name>
</gene>
<protein>
    <recommendedName>
        <fullName evidence="1">UPF0346 protein BcerKBAB4_2120</fullName>
    </recommendedName>
</protein>
<proteinExistence type="inferred from homology"/>
<evidence type="ECO:0000255" key="1">
    <source>
        <dbReference type="HAMAP-Rule" id="MF_01538"/>
    </source>
</evidence>
<name>Y2120_BACMK</name>
<reference key="1">
    <citation type="journal article" date="2008" name="Chem. Biol. Interact.">
        <title>Extending the Bacillus cereus group genomics to putative food-borne pathogens of different toxicity.</title>
        <authorList>
            <person name="Lapidus A."/>
            <person name="Goltsman E."/>
            <person name="Auger S."/>
            <person name="Galleron N."/>
            <person name="Segurens B."/>
            <person name="Dossat C."/>
            <person name="Land M.L."/>
            <person name="Broussolle V."/>
            <person name="Brillard J."/>
            <person name="Guinebretiere M.-H."/>
            <person name="Sanchis V."/>
            <person name="Nguen-the C."/>
            <person name="Lereclus D."/>
            <person name="Richardson P."/>
            <person name="Wincker P."/>
            <person name="Weissenbach J."/>
            <person name="Ehrlich S.D."/>
            <person name="Sorokin A."/>
        </authorList>
    </citation>
    <scope>NUCLEOTIDE SEQUENCE [LARGE SCALE GENOMIC DNA]</scope>
    <source>
        <strain>KBAB4</strain>
    </source>
</reference>
<comment type="similarity">
    <text evidence="1">Belongs to the UPF0346 family.</text>
</comment>
<sequence>MKKTFYHYMMKHRAALFKNEISDLAEAMYDDLSFPKQSEDYDVISSYLELSGMLESMSIFDDAWDLYIQER</sequence>
<accession>A9VU29</accession>